<comment type="function">
    <text evidence="2">Peptidoglycan polymerase that is essential for cell division.</text>
</comment>
<comment type="catalytic activity">
    <reaction evidence="2">
        <text>[GlcNAc-(1-&gt;4)-Mur2Ac(oyl-L-Ala-gamma-D-Glu-L-Lys-D-Ala-D-Ala)](n)-di-trans,octa-cis-undecaprenyl diphosphate + beta-D-GlcNAc-(1-&gt;4)-Mur2Ac(oyl-L-Ala-gamma-D-Glu-L-Lys-D-Ala-D-Ala)-di-trans,octa-cis-undecaprenyl diphosphate = [GlcNAc-(1-&gt;4)-Mur2Ac(oyl-L-Ala-gamma-D-Glu-L-Lys-D-Ala-D-Ala)](n+1)-di-trans,octa-cis-undecaprenyl diphosphate + di-trans,octa-cis-undecaprenyl diphosphate + H(+)</text>
        <dbReference type="Rhea" id="RHEA:23708"/>
        <dbReference type="Rhea" id="RHEA-COMP:9602"/>
        <dbReference type="Rhea" id="RHEA-COMP:9603"/>
        <dbReference type="ChEBI" id="CHEBI:15378"/>
        <dbReference type="ChEBI" id="CHEBI:58405"/>
        <dbReference type="ChEBI" id="CHEBI:60033"/>
        <dbReference type="ChEBI" id="CHEBI:78435"/>
        <dbReference type="EC" id="2.4.99.28"/>
    </reaction>
</comment>
<comment type="pathway">
    <text evidence="2">Cell wall biogenesis; peptidoglycan biosynthesis.</text>
</comment>
<comment type="subcellular location">
    <subcellularLocation>
        <location evidence="2">Cell inner membrane</location>
        <topology evidence="2">Multi-pass membrane protein</topology>
    </subcellularLocation>
    <text evidence="2">Localizes to the division septum.</text>
</comment>
<comment type="similarity">
    <text evidence="2">Belongs to the SEDS family. FtsW subfamily.</text>
</comment>
<evidence type="ECO:0000255" key="1"/>
<evidence type="ECO:0000255" key="2">
    <source>
        <dbReference type="HAMAP-Rule" id="MF_00913"/>
    </source>
</evidence>
<name>FTSW_NITEU</name>
<organism>
    <name type="scientific">Nitrosomonas europaea (strain ATCC 19718 / CIP 103999 / KCTC 2705 / NBRC 14298)</name>
    <dbReference type="NCBI Taxonomy" id="228410"/>
    <lineage>
        <taxon>Bacteria</taxon>
        <taxon>Pseudomonadati</taxon>
        <taxon>Pseudomonadota</taxon>
        <taxon>Betaproteobacteria</taxon>
        <taxon>Nitrosomonadales</taxon>
        <taxon>Nitrosomonadaceae</taxon>
        <taxon>Nitrosomonas</taxon>
    </lineage>
</organism>
<sequence>MMSPSTSAPHNQPIQPELDVLLVSTVLLLLGLGLVMVYSASIAIAEAKFGEGSSYYFLARQASYILAGIAVGIGCFRIPLRWWQAYSHYLLGLGILLLLVVLIPGISHEINGSRRWIPLGITSFQPSELMKLIILIFTADYVVRKAAFKDHFFKGFLPILALLTIVSLLLLMEPDLGATVVIAAIVLSIMFMNGMSLKMFFGLICLVPVLLALLIIIEPYRMDRINAIFDPWNDPFDKGYQLTHALIAFGLGEWWGVGLGSSVEKLNYLPEAHTDFMFAVLAEELGFAGVVTVISLFFFLLVRIFKVGRTAARLGDQFGSLVAQGIGVWLGLQAFINMGVNMGLLPTKGLTLPFMSYGGSSIVINSIAIAILLRIDWENRLKRRGLNA</sequence>
<feature type="chain" id="PRO_0000415202" description="Probable peptidoglycan glycosyltransferase FtsW">
    <location>
        <begin position="1"/>
        <end position="388"/>
    </location>
</feature>
<feature type="topological domain" description="Cytoplasmic" evidence="1">
    <location>
        <begin position="1"/>
        <end position="19"/>
    </location>
</feature>
<feature type="transmembrane region" description="Helical" evidence="2">
    <location>
        <begin position="20"/>
        <end position="40"/>
    </location>
</feature>
<feature type="topological domain" description="Periplasmic" evidence="1">
    <location>
        <begin position="41"/>
        <end position="55"/>
    </location>
</feature>
<feature type="transmembrane region" description="Helical" evidence="2">
    <location>
        <begin position="56"/>
        <end position="76"/>
    </location>
</feature>
<feature type="topological domain" description="Cytoplasmic" evidence="1">
    <location>
        <begin position="77"/>
        <end position="89"/>
    </location>
</feature>
<feature type="transmembrane region" description="Helical" evidence="2">
    <location>
        <begin position="90"/>
        <end position="110"/>
    </location>
</feature>
<feature type="topological domain" description="Periplasmic" evidence="1">
    <location>
        <begin position="111"/>
        <end position="116"/>
    </location>
</feature>
<feature type="transmembrane region" description="Helical" evidence="2">
    <location>
        <begin position="117"/>
        <end position="137"/>
    </location>
</feature>
<feature type="topological domain" description="Cytoplasmic" evidence="1">
    <location>
        <begin position="138"/>
        <end position="151"/>
    </location>
</feature>
<feature type="transmembrane region" description="Helical" evidence="2">
    <location>
        <begin position="152"/>
        <end position="172"/>
    </location>
</feature>
<feature type="topological domain" description="Periplasmic" evidence="1">
    <location>
        <begin position="173"/>
        <end position="175"/>
    </location>
</feature>
<feature type="transmembrane region" description="Helical" evidence="2">
    <location>
        <begin position="176"/>
        <end position="196"/>
    </location>
</feature>
<feature type="transmembrane region" description="Helical" evidence="2">
    <location>
        <begin position="197"/>
        <end position="217"/>
    </location>
</feature>
<feature type="topological domain" description="Periplasmic" evidence="1">
    <location>
        <begin position="218"/>
        <end position="284"/>
    </location>
</feature>
<feature type="transmembrane region" description="Helical" evidence="2">
    <location>
        <begin position="285"/>
        <end position="305"/>
    </location>
</feature>
<feature type="topological domain" description="Cytoplasmic" evidence="1">
    <location>
        <begin position="306"/>
        <end position="324"/>
    </location>
</feature>
<feature type="transmembrane region" description="Helical" evidence="2">
    <location>
        <begin position="325"/>
        <end position="345"/>
    </location>
</feature>
<feature type="topological domain" description="Periplasmic" evidence="1">
    <location>
        <begin position="346"/>
        <end position="351"/>
    </location>
</feature>
<feature type="transmembrane region" description="Helical" evidence="2">
    <location>
        <begin position="352"/>
        <end position="372"/>
    </location>
</feature>
<feature type="topological domain" description="Cytoplasmic" evidence="1">
    <location>
        <begin position="373"/>
        <end position="388"/>
    </location>
</feature>
<gene>
    <name evidence="2" type="primary">ftsW</name>
    <name type="ordered locus">NE0990</name>
</gene>
<keyword id="KW-0131">Cell cycle</keyword>
<keyword id="KW-0132">Cell division</keyword>
<keyword id="KW-0997">Cell inner membrane</keyword>
<keyword id="KW-1003">Cell membrane</keyword>
<keyword id="KW-0133">Cell shape</keyword>
<keyword id="KW-0961">Cell wall biogenesis/degradation</keyword>
<keyword id="KW-0328">Glycosyltransferase</keyword>
<keyword id="KW-0472">Membrane</keyword>
<keyword id="KW-0573">Peptidoglycan synthesis</keyword>
<keyword id="KW-1185">Reference proteome</keyword>
<keyword id="KW-0808">Transferase</keyword>
<keyword id="KW-0812">Transmembrane</keyword>
<keyword id="KW-1133">Transmembrane helix</keyword>
<dbReference type="EC" id="2.4.99.28" evidence="2"/>
<dbReference type="EMBL" id="AL954747">
    <property type="protein sequence ID" value="CAD84901.1"/>
    <property type="molecule type" value="Genomic_DNA"/>
</dbReference>
<dbReference type="SMR" id="Q82VS4"/>
<dbReference type="STRING" id="228410.NE0990"/>
<dbReference type="KEGG" id="neu:NE0990"/>
<dbReference type="eggNOG" id="COG0772">
    <property type="taxonomic scope" value="Bacteria"/>
</dbReference>
<dbReference type="HOGENOM" id="CLU_029243_1_1_4"/>
<dbReference type="PhylomeDB" id="Q82VS4"/>
<dbReference type="UniPathway" id="UPA00219"/>
<dbReference type="Proteomes" id="UP000001416">
    <property type="component" value="Chromosome"/>
</dbReference>
<dbReference type="GO" id="GO:0032153">
    <property type="term" value="C:cell division site"/>
    <property type="evidence" value="ECO:0007669"/>
    <property type="project" value="UniProtKB-UniRule"/>
</dbReference>
<dbReference type="GO" id="GO:0005886">
    <property type="term" value="C:plasma membrane"/>
    <property type="evidence" value="ECO:0007669"/>
    <property type="project" value="UniProtKB-SubCell"/>
</dbReference>
<dbReference type="GO" id="GO:0015648">
    <property type="term" value="F:lipid-linked peptidoglycan transporter activity"/>
    <property type="evidence" value="ECO:0007669"/>
    <property type="project" value="TreeGrafter"/>
</dbReference>
<dbReference type="GO" id="GO:0008955">
    <property type="term" value="F:peptidoglycan glycosyltransferase activity"/>
    <property type="evidence" value="ECO:0007669"/>
    <property type="project" value="UniProtKB-UniRule"/>
</dbReference>
<dbReference type="GO" id="GO:0071555">
    <property type="term" value="P:cell wall organization"/>
    <property type="evidence" value="ECO:0007669"/>
    <property type="project" value="UniProtKB-KW"/>
</dbReference>
<dbReference type="GO" id="GO:0043093">
    <property type="term" value="P:FtsZ-dependent cytokinesis"/>
    <property type="evidence" value="ECO:0007669"/>
    <property type="project" value="UniProtKB-UniRule"/>
</dbReference>
<dbReference type="GO" id="GO:0009252">
    <property type="term" value="P:peptidoglycan biosynthetic process"/>
    <property type="evidence" value="ECO:0007669"/>
    <property type="project" value="UniProtKB-UniRule"/>
</dbReference>
<dbReference type="GO" id="GO:0008360">
    <property type="term" value="P:regulation of cell shape"/>
    <property type="evidence" value="ECO:0007669"/>
    <property type="project" value="UniProtKB-KW"/>
</dbReference>
<dbReference type="HAMAP" id="MF_00913">
    <property type="entry name" value="PGT_FtsW_proteobact"/>
    <property type="match status" value="1"/>
</dbReference>
<dbReference type="InterPro" id="IPR018365">
    <property type="entry name" value="Cell_cycle_FtsW-rel_CS"/>
</dbReference>
<dbReference type="InterPro" id="IPR013437">
    <property type="entry name" value="FtsW"/>
</dbReference>
<dbReference type="InterPro" id="IPR001182">
    <property type="entry name" value="FtsW/RodA"/>
</dbReference>
<dbReference type="NCBIfam" id="TIGR02614">
    <property type="entry name" value="ftsW"/>
    <property type="match status" value="1"/>
</dbReference>
<dbReference type="PANTHER" id="PTHR30474">
    <property type="entry name" value="CELL CYCLE PROTEIN"/>
    <property type="match status" value="1"/>
</dbReference>
<dbReference type="PANTHER" id="PTHR30474:SF2">
    <property type="entry name" value="PEPTIDOGLYCAN GLYCOSYLTRANSFERASE FTSW-RELATED"/>
    <property type="match status" value="1"/>
</dbReference>
<dbReference type="Pfam" id="PF01098">
    <property type="entry name" value="FTSW_RODA_SPOVE"/>
    <property type="match status" value="1"/>
</dbReference>
<dbReference type="PROSITE" id="PS00428">
    <property type="entry name" value="FTSW_RODA_SPOVE"/>
    <property type="match status" value="1"/>
</dbReference>
<reference key="1">
    <citation type="journal article" date="2003" name="J. Bacteriol.">
        <title>Complete genome sequence of the ammonia-oxidizing bacterium and obligate chemolithoautotroph Nitrosomonas europaea.</title>
        <authorList>
            <person name="Chain P."/>
            <person name="Lamerdin J.E."/>
            <person name="Larimer F.W."/>
            <person name="Regala W."/>
            <person name="Lao V."/>
            <person name="Land M.L."/>
            <person name="Hauser L."/>
            <person name="Hooper A.B."/>
            <person name="Klotz M.G."/>
            <person name="Norton J."/>
            <person name="Sayavedra-Soto L.A."/>
            <person name="Arciero D.M."/>
            <person name="Hommes N.G."/>
            <person name="Whittaker M.M."/>
            <person name="Arp D.J."/>
        </authorList>
    </citation>
    <scope>NUCLEOTIDE SEQUENCE [LARGE SCALE GENOMIC DNA]</scope>
    <source>
        <strain>ATCC 19718 / CIP 103999 / KCTC 2705 / NBRC 14298</strain>
    </source>
</reference>
<proteinExistence type="inferred from homology"/>
<protein>
    <recommendedName>
        <fullName evidence="2">Probable peptidoglycan glycosyltransferase FtsW</fullName>
        <shortName evidence="2">PGT</shortName>
        <ecNumber evidence="2">2.4.99.28</ecNumber>
    </recommendedName>
    <alternativeName>
        <fullName evidence="2">Cell division protein FtsW</fullName>
    </alternativeName>
    <alternativeName>
        <fullName evidence="2">Cell wall polymerase</fullName>
    </alternativeName>
    <alternativeName>
        <fullName evidence="2">Peptidoglycan polymerase</fullName>
        <shortName evidence="2">PG polymerase</shortName>
    </alternativeName>
</protein>
<accession>Q82VS4</accession>